<gene>
    <name evidence="1" type="primary">secA</name>
    <name type="ordered locus">Chy400_0565</name>
</gene>
<name>SECA_CHLSY</name>
<feature type="chain" id="PRO_1000215103" description="Protein translocase subunit SecA">
    <location>
        <begin position="1"/>
        <end position="995"/>
    </location>
</feature>
<feature type="region of interest" description="Disordered" evidence="2">
    <location>
        <begin position="883"/>
        <end position="911"/>
    </location>
</feature>
<feature type="region of interest" description="Disordered" evidence="2">
    <location>
        <begin position="939"/>
        <end position="995"/>
    </location>
</feature>
<feature type="compositionally biased region" description="Low complexity" evidence="2">
    <location>
        <begin position="957"/>
        <end position="969"/>
    </location>
</feature>
<feature type="binding site" evidence="1">
    <location>
        <position position="86"/>
    </location>
    <ligand>
        <name>ATP</name>
        <dbReference type="ChEBI" id="CHEBI:30616"/>
    </ligand>
</feature>
<feature type="binding site" evidence="1">
    <location>
        <begin position="104"/>
        <end position="108"/>
    </location>
    <ligand>
        <name>ATP</name>
        <dbReference type="ChEBI" id="CHEBI:30616"/>
    </ligand>
</feature>
<feature type="binding site" evidence="1">
    <location>
        <position position="535"/>
    </location>
    <ligand>
        <name>ATP</name>
        <dbReference type="ChEBI" id="CHEBI:30616"/>
    </ligand>
</feature>
<feature type="binding site" evidence="1">
    <location>
        <position position="912"/>
    </location>
    <ligand>
        <name>Zn(2+)</name>
        <dbReference type="ChEBI" id="CHEBI:29105"/>
    </ligand>
</feature>
<feature type="binding site" evidence="1">
    <location>
        <position position="914"/>
    </location>
    <ligand>
        <name>Zn(2+)</name>
        <dbReference type="ChEBI" id="CHEBI:29105"/>
    </ligand>
</feature>
<feature type="binding site" evidence="1">
    <location>
        <position position="923"/>
    </location>
    <ligand>
        <name>Zn(2+)</name>
        <dbReference type="ChEBI" id="CHEBI:29105"/>
    </ligand>
</feature>
<feature type="binding site" evidence="1">
    <location>
        <position position="924"/>
    </location>
    <ligand>
        <name>Zn(2+)</name>
        <dbReference type="ChEBI" id="CHEBI:29105"/>
    </ligand>
</feature>
<reference key="1">
    <citation type="submission" date="2009-01" db="EMBL/GenBank/DDBJ databases">
        <title>Complete sequence of Chloroflexus sp. Y-400-fl.</title>
        <authorList>
            <consortium name="US DOE Joint Genome Institute"/>
            <person name="Lucas S."/>
            <person name="Copeland A."/>
            <person name="Lapidus A."/>
            <person name="Glavina del Rio T."/>
            <person name="Dalin E."/>
            <person name="Tice H."/>
            <person name="Bruce D."/>
            <person name="Goodwin L."/>
            <person name="Pitluck S."/>
            <person name="Sims D."/>
            <person name="Kiss H."/>
            <person name="Brettin T."/>
            <person name="Detter J.C."/>
            <person name="Han C."/>
            <person name="Larimer F."/>
            <person name="Land M."/>
            <person name="Hauser L."/>
            <person name="Kyrpides N."/>
            <person name="Ovchinnikova G."/>
            <person name="Bryant D.A."/>
            <person name="Richardson P."/>
        </authorList>
    </citation>
    <scope>NUCLEOTIDE SEQUENCE [LARGE SCALE GENOMIC DNA]</scope>
    <source>
        <strain>ATCC 29364 / DSM 637 / Y-400-fl</strain>
    </source>
</reference>
<dbReference type="EC" id="7.4.2.8" evidence="1"/>
<dbReference type="EMBL" id="CP001364">
    <property type="protein sequence ID" value="ACM52002.1"/>
    <property type="molecule type" value="Genomic_DNA"/>
</dbReference>
<dbReference type="SMR" id="B9LJ40"/>
<dbReference type="KEGG" id="chl:Chy400_0565"/>
<dbReference type="HOGENOM" id="CLU_005314_3_0_0"/>
<dbReference type="OrthoDB" id="9805579at2"/>
<dbReference type="GO" id="GO:0031522">
    <property type="term" value="C:cell envelope Sec protein transport complex"/>
    <property type="evidence" value="ECO:0007669"/>
    <property type="project" value="TreeGrafter"/>
</dbReference>
<dbReference type="GO" id="GO:0005829">
    <property type="term" value="C:cytosol"/>
    <property type="evidence" value="ECO:0007669"/>
    <property type="project" value="TreeGrafter"/>
</dbReference>
<dbReference type="GO" id="GO:0005886">
    <property type="term" value="C:plasma membrane"/>
    <property type="evidence" value="ECO:0007669"/>
    <property type="project" value="UniProtKB-SubCell"/>
</dbReference>
<dbReference type="GO" id="GO:0005524">
    <property type="term" value="F:ATP binding"/>
    <property type="evidence" value="ECO:0007669"/>
    <property type="project" value="UniProtKB-UniRule"/>
</dbReference>
<dbReference type="GO" id="GO:0046872">
    <property type="term" value="F:metal ion binding"/>
    <property type="evidence" value="ECO:0007669"/>
    <property type="project" value="UniProtKB-KW"/>
</dbReference>
<dbReference type="GO" id="GO:0008564">
    <property type="term" value="F:protein-exporting ATPase activity"/>
    <property type="evidence" value="ECO:0007669"/>
    <property type="project" value="UniProtKB-EC"/>
</dbReference>
<dbReference type="GO" id="GO:0065002">
    <property type="term" value="P:intracellular protein transmembrane transport"/>
    <property type="evidence" value="ECO:0007669"/>
    <property type="project" value="UniProtKB-UniRule"/>
</dbReference>
<dbReference type="GO" id="GO:0017038">
    <property type="term" value="P:protein import"/>
    <property type="evidence" value="ECO:0007669"/>
    <property type="project" value="InterPro"/>
</dbReference>
<dbReference type="GO" id="GO:0006605">
    <property type="term" value="P:protein targeting"/>
    <property type="evidence" value="ECO:0007669"/>
    <property type="project" value="UniProtKB-UniRule"/>
</dbReference>
<dbReference type="GO" id="GO:0043952">
    <property type="term" value="P:protein transport by the Sec complex"/>
    <property type="evidence" value="ECO:0007669"/>
    <property type="project" value="TreeGrafter"/>
</dbReference>
<dbReference type="CDD" id="cd17928">
    <property type="entry name" value="DEXDc_SecA"/>
    <property type="match status" value="1"/>
</dbReference>
<dbReference type="CDD" id="cd18803">
    <property type="entry name" value="SF2_C_secA"/>
    <property type="match status" value="1"/>
</dbReference>
<dbReference type="FunFam" id="3.40.50.300:FF:000113">
    <property type="entry name" value="Preprotein translocase subunit SecA"/>
    <property type="match status" value="1"/>
</dbReference>
<dbReference type="FunFam" id="1.10.3060.10:FF:000003">
    <property type="entry name" value="Protein translocase subunit SecA"/>
    <property type="match status" value="1"/>
</dbReference>
<dbReference type="FunFam" id="3.90.1440.10:FF:000002">
    <property type="entry name" value="Protein translocase subunit SecA"/>
    <property type="match status" value="1"/>
</dbReference>
<dbReference type="Gene3D" id="1.10.3060.10">
    <property type="entry name" value="Helical scaffold and wing domains of SecA"/>
    <property type="match status" value="1"/>
</dbReference>
<dbReference type="Gene3D" id="3.40.50.300">
    <property type="entry name" value="P-loop containing nucleotide triphosphate hydrolases"/>
    <property type="match status" value="2"/>
</dbReference>
<dbReference type="Gene3D" id="3.90.1440.10">
    <property type="entry name" value="SecA, preprotein cross-linking domain"/>
    <property type="match status" value="1"/>
</dbReference>
<dbReference type="HAMAP" id="MF_01382">
    <property type="entry name" value="SecA"/>
    <property type="match status" value="1"/>
</dbReference>
<dbReference type="InterPro" id="IPR014001">
    <property type="entry name" value="Helicase_ATP-bd"/>
</dbReference>
<dbReference type="InterPro" id="IPR001650">
    <property type="entry name" value="Helicase_C-like"/>
</dbReference>
<dbReference type="InterPro" id="IPR027417">
    <property type="entry name" value="P-loop_NTPase"/>
</dbReference>
<dbReference type="InterPro" id="IPR004027">
    <property type="entry name" value="SEC_C_motif"/>
</dbReference>
<dbReference type="InterPro" id="IPR000185">
    <property type="entry name" value="SecA"/>
</dbReference>
<dbReference type="InterPro" id="IPR020937">
    <property type="entry name" value="SecA_CS"/>
</dbReference>
<dbReference type="InterPro" id="IPR011115">
    <property type="entry name" value="SecA_DEAD"/>
</dbReference>
<dbReference type="InterPro" id="IPR014018">
    <property type="entry name" value="SecA_motor_DEAD"/>
</dbReference>
<dbReference type="InterPro" id="IPR011130">
    <property type="entry name" value="SecA_preprotein_X-link_dom"/>
</dbReference>
<dbReference type="InterPro" id="IPR044722">
    <property type="entry name" value="SecA_SF2_C"/>
</dbReference>
<dbReference type="InterPro" id="IPR011116">
    <property type="entry name" value="SecA_Wing/Scaffold"/>
</dbReference>
<dbReference type="InterPro" id="IPR036266">
    <property type="entry name" value="SecA_Wing/Scaffold_sf"/>
</dbReference>
<dbReference type="InterPro" id="IPR036670">
    <property type="entry name" value="SecA_X-link_sf"/>
</dbReference>
<dbReference type="NCBIfam" id="NF009538">
    <property type="entry name" value="PRK12904.1"/>
    <property type="match status" value="1"/>
</dbReference>
<dbReference type="NCBIfam" id="TIGR00963">
    <property type="entry name" value="secA"/>
    <property type="match status" value="1"/>
</dbReference>
<dbReference type="PANTHER" id="PTHR30612:SF0">
    <property type="entry name" value="CHLOROPLAST PROTEIN-TRANSPORTING ATPASE"/>
    <property type="match status" value="1"/>
</dbReference>
<dbReference type="PANTHER" id="PTHR30612">
    <property type="entry name" value="SECA INNER MEMBRANE COMPONENT OF SEC PROTEIN SECRETION SYSTEM"/>
    <property type="match status" value="1"/>
</dbReference>
<dbReference type="Pfam" id="PF21090">
    <property type="entry name" value="P-loop_SecA"/>
    <property type="match status" value="1"/>
</dbReference>
<dbReference type="Pfam" id="PF02810">
    <property type="entry name" value="SEC-C"/>
    <property type="match status" value="1"/>
</dbReference>
<dbReference type="Pfam" id="PF07517">
    <property type="entry name" value="SecA_DEAD"/>
    <property type="match status" value="1"/>
</dbReference>
<dbReference type="Pfam" id="PF01043">
    <property type="entry name" value="SecA_PP_bind"/>
    <property type="match status" value="1"/>
</dbReference>
<dbReference type="Pfam" id="PF07516">
    <property type="entry name" value="SecA_SW"/>
    <property type="match status" value="1"/>
</dbReference>
<dbReference type="PRINTS" id="PR00906">
    <property type="entry name" value="SECA"/>
</dbReference>
<dbReference type="SMART" id="SM00957">
    <property type="entry name" value="SecA_DEAD"/>
    <property type="match status" value="1"/>
</dbReference>
<dbReference type="SMART" id="SM00958">
    <property type="entry name" value="SecA_PP_bind"/>
    <property type="match status" value="1"/>
</dbReference>
<dbReference type="SUPFAM" id="SSF81886">
    <property type="entry name" value="Helical scaffold and wing domains of SecA"/>
    <property type="match status" value="1"/>
</dbReference>
<dbReference type="SUPFAM" id="SSF52540">
    <property type="entry name" value="P-loop containing nucleoside triphosphate hydrolases"/>
    <property type="match status" value="2"/>
</dbReference>
<dbReference type="SUPFAM" id="SSF81767">
    <property type="entry name" value="Pre-protein crosslinking domain of SecA"/>
    <property type="match status" value="1"/>
</dbReference>
<dbReference type="PROSITE" id="PS01312">
    <property type="entry name" value="SECA"/>
    <property type="match status" value="1"/>
</dbReference>
<dbReference type="PROSITE" id="PS51196">
    <property type="entry name" value="SECA_MOTOR_DEAD"/>
    <property type="match status" value="1"/>
</dbReference>
<proteinExistence type="inferred from homology"/>
<evidence type="ECO:0000255" key="1">
    <source>
        <dbReference type="HAMAP-Rule" id="MF_01382"/>
    </source>
</evidence>
<evidence type="ECO:0000256" key="2">
    <source>
        <dbReference type="SAM" id="MobiDB-lite"/>
    </source>
</evidence>
<comment type="function">
    <text evidence="1">Part of the Sec protein translocase complex. Interacts with the SecYEG preprotein conducting channel. Has a central role in coupling the hydrolysis of ATP to the transfer of proteins into and across the cell membrane, serving as an ATP-driven molecular motor driving the stepwise translocation of polypeptide chains across the membrane.</text>
</comment>
<comment type="catalytic activity">
    <reaction evidence="1">
        <text>ATP + H2O + cellular proteinSide 1 = ADP + phosphate + cellular proteinSide 2.</text>
        <dbReference type="EC" id="7.4.2.8"/>
    </reaction>
</comment>
<comment type="cofactor">
    <cofactor evidence="1">
        <name>Zn(2+)</name>
        <dbReference type="ChEBI" id="CHEBI:29105"/>
    </cofactor>
    <text evidence="1">May bind 1 zinc ion per subunit.</text>
</comment>
<comment type="subunit">
    <text evidence="1">Monomer and homodimer. Part of the essential Sec protein translocation apparatus which comprises SecA, SecYEG and auxiliary proteins SecDF. Other proteins may also be involved.</text>
</comment>
<comment type="subcellular location">
    <subcellularLocation>
        <location evidence="1">Cell membrane</location>
        <topology evidence="1">Peripheral membrane protein</topology>
        <orientation evidence="1">Cytoplasmic side</orientation>
    </subcellularLocation>
    <subcellularLocation>
        <location evidence="1">Cytoplasm</location>
    </subcellularLocation>
    <text evidence="1">Distribution is 50-50.</text>
</comment>
<comment type="similarity">
    <text evidence="1">Belongs to the SecA family.</text>
</comment>
<protein>
    <recommendedName>
        <fullName evidence="1">Protein translocase subunit SecA</fullName>
        <ecNumber evidence="1">7.4.2.8</ecNumber>
    </recommendedName>
</protein>
<keyword id="KW-0067">ATP-binding</keyword>
<keyword id="KW-1003">Cell membrane</keyword>
<keyword id="KW-0963">Cytoplasm</keyword>
<keyword id="KW-0472">Membrane</keyword>
<keyword id="KW-0479">Metal-binding</keyword>
<keyword id="KW-0547">Nucleotide-binding</keyword>
<keyword id="KW-0653">Protein transport</keyword>
<keyword id="KW-1278">Translocase</keyword>
<keyword id="KW-0811">Translocation</keyword>
<keyword id="KW-0813">Transport</keyword>
<keyword id="KW-0862">Zinc</keyword>
<accession>B9LJ40</accession>
<sequence>MMNFLRRLLGDSNEKELRRLQPIVEEINRLGPEFAALSDAELRAKTDEFRQRLADGETLDDILPEAFATVREAAHRTIGLRHYDVQLIGGIVLHQGKIAEMKTGEGKTLVATLPLYLNALEGKGVHLVTVNDYLAKVGAGWMGPIYHFLGLTVGFIAHDQSALYDPDFIDPDANPEDQRLVHWRPCTRREAYLADITYGTNNEFGFDYLRDNMAYEKSQLVQRELHYAIVDEVDNILIDEARTPLIISGPAQKSSDLYRQMAQLVRQLRRSSVTAKQVKEEGLEPDGDFFVDERTKSIYLSEKGIEKLERLLRIPPGESLFDPEHYEKTHYIENALKAQFIYQRDRDYMVTPNGEVVIIDEFTGRAMPGRRWSDGLHQAVEAKEGVAIKNENVTLATITFQNYFRMYKKLAGMTGTAYTEREEFAKIYNLEVVVIPTHKPMIREDLPDQIYATEEAKFNAVLREVQEMHEIGRPVLIGTTSVETSERISAMLKRAGIPHNVLNAKHHEREAAIIAQAGRKGAVTVATNMAGRGTDILLGGNPDGLLEEFLRKEGLTIETATPEQKRAAWEKARAQTEAEGEEVRRLGGLHVIGTERHEARRIDNQLRGRAGRQGDPGSSRFFLSLEDELLRRFGPVDRIKGLMERFVDSDVPLQAGLLDRTIEGAQTRVEGYNFDVRKHTVEFDDVMNKQRQIIYADRKAILDEADMRERVLDLMAEEIQRQIDEHLIDGFEEEDLTNLLRAYRRINSTLPASVTAETLKGKTKEEIEQYLLDHLETTYAERERAVTPELMRTIERRVMLGAIDRQWVDYLTAMDELRQNILLQAYAQRDPLVEFKRESFRMFDELKQNIARDIVYNIIPATFQYEAYLRQIAEEQARRLATAQTVSSDGNGEVVRKPQRRSTPQIGRNELCPCGSGKKFKHCHLGREHELASLLNAQPSAPPASKALKSTPATQTAVAEEAAKIQAAINSGKLPPTQTTPRGRQAPSVPRGKKR</sequence>
<organism>
    <name type="scientific">Chloroflexus aurantiacus (strain ATCC 29364 / DSM 637 / Y-400-fl)</name>
    <dbReference type="NCBI Taxonomy" id="480224"/>
    <lineage>
        <taxon>Bacteria</taxon>
        <taxon>Bacillati</taxon>
        <taxon>Chloroflexota</taxon>
        <taxon>Chloroflexia</taxon>
        <taxon>Chloroflexales</taxon>
        <taxon>Chloroflexineae</taxon>
        <taxon>Chloroflexaceae</taxon>
        <taxon>Chloroflexus</taxon>
    </lineage>
</organism>